<keyword id="KW-0997">Cell inner membrane</keyword>
<keyword id="KW-1003">Cell membrane</keyword>
<keyword id="KW-0444">Lipid biosynthesis</keyword>
<keyword id="KW-0443">Lipid metabolism</keyword>
<keyword id="KW-0472">Membrane</keyword>
<keyword id="KW-0594">Phospholipid biosynthesis</keyword>
<keyword id="KW-1208">Phospholipid metabolism</keyword>
<keyword id="KW-1185">Reference proteome</keyword>
<keyword id="KW-0677">Repeat</keyword>
<keyword id="KW-0808">Transferase</keyword>
<keyword id="KW-0812">Transmembrane</keyword>
<keyword id="KW-1133">Transmembrane helix</keyword>
<reference key="1">
    <citation type="journal article" date="2008" name="J. Bacteriol.">
        <title>Complete genome sequence of uropathogenic Proteus mirabilis, a master of both adherence and motility.</title>
        <authorList>
            <person name="Pearson M.M."/>
            <person name="Sebaihia M."/>
            <person name="Churcher C."/>
            <person name="Quail M.A."/>
            <person name="Seshasayee A.S."/>
            <person name="Luscombe N.M."/>
            <person name="Abdellah Z."/>
            <person name="Arrosmith C."/>
            <person name="Atkin B."/>
            <person name="Chillingworth T."/>
            <person name="Hauser H."/>
            <person name="Jagels K."/>
            <person name="Moule S."/>
            <person name="Mungall K."/>
            <person name="Norbertczak H."/>
            <person name="Rabbinowitsch E."/>
            <person name="Walker D."/>
            <person name="Whithead S."/>
            <person name="Thomson N.R."/>
            <person name="Rather P.N."/>
            <person name="Parkhill J."/>
            <person name="Mobley H.L.T."/>
        </authorList>
    </citation>
    <scope>NUCLEOTIDE SEQUENCE [LARGE SCALE GENOMIC DNA]</scope>
    <source>
        <strain>HI4320</strain>
    </source>
</reference>
<protein>
    <recommendedName>
        <fullName evidence="1">Cardiolipin synthase A</fullName>
        <shortName evidence="1">CL synthase</shortName>
        <ecNumber evidence="1">2.7.8.-</ecNumber>
    </recommendedName>
</protein>
<organism>
    <name type="scientific">Proteus mirabilis (strain HI4320)</name>
    <dbReference type="NCBI Taxonomy" id="529507"/>
    <lineage>
        <taxon>Bacteria</taxon>
        <taxon>Pseudomonadati</taxon>
        <taxon>Pseudomonadota</taxon>
        <taxon>Gammaproteobacteria</taxon>
        <taxon>Enterobacterales</taxon>
        <taxon>Morganellaceae</taxon>
        <taxon>Proteus</taxon>
    </lineage>
</organism>
<evidence type="ECO:0000255" key="1">
    <source>
        <dbReference type="HAMAP-Rule" id="MF_00190"/>
    </source>
</evidence>
<gene>
    <name evidence="1" type="primary">clsA</name>
    <name type="synonym">cls</name>
    <name type="ordered locus">PMI1357</name>
</gene>
<feature type="chain" id="PRO_1000098909" description="Cardiolipin synthase A">
    <location>
        <begin position="1"/>
        <end position="486"/>
    </location>
</feature>
<feature type="transmembrane region" description="Helical" evidence="1">
    <location>
        <begin position="3"/>
        <end position="23"/>
    </location>
</feature>
<feature type="transmembrane region" description="Helical" evidence="1">
    <location>
        <begin position="38"/>
        <end position="58"/>
    </location>
</feature>
<feature type="domain" description="PLD phosphodiesterase 1" evidence="1">
    <location>
        <begin position="219"/>
        <end position="246"/>
    </location>
</feature>
<feature type="domain" description="PLD phosphodiesterase 2" evidence="1">
    <location>
        <begin position="399"/>
        <end position="426"/>
    </location>
</feature>
<feature type="active site" evidence="1">
    <location>
        <position position="224"/>
    </location>
</feature>
<feature type="active site" evidence="1">
    <location>
        <position position="226"/>
    </location>
</feature>
<feature type="active site" evidence="1">
    <location>
        <position position="231"/>
    </location>
</feature>
<feature type="active site" evidence="1">
    <location>
        <position position="404"/>
    </location>
</feature>
<feature type="active site" evidence="1">
    <location>
        <position position="406"/>
    </location>
</feature>
<feature type="active site" evidence="1">
    <location>
        <position position="411"/>
    </location>
</feature>
<name>CLSA_PROMH</name>
<sequence>MTTFYTVLSWLTFFFYWLLIAGVTFRVLMHRRPVTSTMTWLLIIYILPLVGVIAYFAFGELHLGKRRVEHARQMWPSVVAWLEELKKCKHIFAKHYSDVAEPIFQLTAKRQGINGVKGNKIQLLTTCEDSLNAITRDINNARDNIEMVFYIWQSGGLVEEVTEALIQAAKRGVKCRIMVDSAGSRSFFRTNGPARMRAAGIEFVESLQVNLFRFFLRRMDLRQHRKIVLIDNYISYTGSMNMVDPRYFKQDAGVGQWIDIMVRMEGPVSTTLGIIYAFDWEMETGERHLPPPPDNNIMPFEQANGHTTQVIASGPGFPEELIQQSLITAIYSARKELVMTTPYFVPSDDLAHAISTAAMRGVDVSIIVPRSNDSFLVRWASRAFFTEILEAGVKVFQFEDGLLHTKSVMVDGQLSMVGSVNLDMRSLWLNFEITVVIDDECFASDLSIVQYDYIARSTQLTLDEWEKRPFMNRVLERLCYFFSPLL</sequence>
<dbReference type="EC" id="2.7.8.-" evidence="1"/>
<dbReference type="EMBL" id="AM942759">
    <property type="protein sequence ID" value="CAR42873.1"/>
    <property type="molecule type" value="Genomic_DNA"/>
</dbReference>
<dbReference type="RefSeq" id="WP_004248139.1">
    <property type="nucleotide sequence ID" value="NC_010554.1"/>
</dbReference>
<dbReference type="SMR" id="B4EWI7"/>
<dbReference type="EnsemblBacteria" id="CAR42873">
    <property type="protein sequence ID" value="CAR42873"/>
    <property type="gene ID" value="PMI1357"/>
</dbReference>
<dbReference type="GeneID" id="6802116"/>
<dbReference type="KEGG" id="pmr:PMI1357"/>
<dbReference type="eggNOG" id="COG1502">
    <property type="taxonomic scope" value="Bacteria"/>
</dbReference>
<dbReference type="HOGENOM" id="CLU_038053_1_0_6"/>
<dbReference type="Proteomes" id="UP000008319">
    <property type="component" value="Chromosome"/>
</dbReference>
<dbReference type="GO" id="GO:0005886">
    <property type="term" value="C:plasma membrane"/>
    <property type="evidence" value="ECO:0007669"/>
    <property type="project" value="UniProtKB-SubCell"/>
</dbReference>
<dbReference type="GO" id="GO:0008808">
    <property type="term" value="F:cardiolipin synthase activity"/>
    <property type="evidence" value="ECO:0007669"/>
    <property type="project" value="InterPro"/>
</dbReference>
<dbReference type="GO" id="GO:0032049">
    <property type="term" value="P:cardiolipin biosynthetic process"/>
    <property type="evidence" value="ECO:0007669"/>
    <property type="project" value="InterPro"/>
</dbReference>
<dbReference type="CDD" id="cd09152">
    <property type="entry name" value="PLDc_EcCLS_like_1"/>
    <property type="match status" value="1"/>
</dbReference>
<dbReference type="CDD" id="cd09158">
    <property type="entry name" value="PLDc_EcCLS_like_2"/>
    <property type="match status" value="1"/>
</dbReference>
<dbReference type="FunFam" id="3.30.870.10:FF:000003">
    <property type="entry name" value="Cardiolipin synthase A"/>
    <property type="match status" value="1"/>
</dbReference>
<dbReference type="Gene3D" id="3.30.870.10">
    <property type="entry name" value="Endonuclease Chain A"/>
    <property type="match status" value="2"/>
</dbReference>
<dbReference type="HAMAP" id="MF_00190">
    <property type="entry name" value="Cardiolipin_synth_ClsA"/>
    <property type="match status" value="1"/>
</dbReference>
<dbReference type="InterPro" id="IPR022924">
    <property type="entry name" value="Cardiolipin_synthase"/>
</dbReference>
<dbReference type="InterPro" id="IPR030840">
    <property type="entry name" value="CL_synthase_A"/>
</dbReference>
<dbReference type="InterPro" id="IPR027379">
    <property type="entry name" value="CLS_N"/>
</dbReference>
<dbReference type="InterPro" id="IPR025202">
    <property type="entry name" value="PLD-like_dom"/>
</dbReference>
<dbReference type="InterPro" id="IPR001736">
    <property type="entry name" value="PLipase_D/transphosphatidylase"/>
</dbReference>
<dbReference type="NCBIfam" id="TIGR04265">
    <property type="entry name" value="bac_cardiolipin"/>
    <property type="match status" value="1"/>
</dbReference>
<dbReference type="PANTHER" id="PTHR21248">
    <property type="entry name" value="CARDIOLIPIN SYNTHASE"/>
    <property type="match status" value="1"/>
</dbReference>
<dbReference type="PANTHER" id="PTHR21248:SF22">
    <property type="entry name" value="PHOSPHOLIPASE D"/>
    <property type="match status" value="1"/>
</dbReference>
<dbReference type="Pfam" id="PF13091">
    <property type="entry name" value="PLDc_2"/>
    <property type="match status" value="2"/>
</dbReference>
<dbReference type="Pfam" id="PF13396">
    <property type="entry name" value="PLDc_N"/>
    <property type="match status" value="1"/>
</dbReference>
<dbReference type="SMART" id="SM00155">
    <property type="entry name" value="PLDc"/>
    <property type="match status" value="2"/>
</dbReference>
<dbReference type="SUPFAM" id="SSF56024">
    <property type="entry name" value="Phospholipase D/nuclease"/>
    <property type="match status" value="2"/>
</dbReference>
<dbReference type="PROSITE" id="PS50035">
    <property type="entry name" value="PLD"/>
    <property type="match status" value="2"/>
</dbReference>
<comment type="function">
    <text evidence="1">Catalyzes the reversible phosphatidyl group transfer from one phosphatidylglycerol molecule to another to form cardiolipin (CL) (diphosphatidylglycerol) and glycerol.</text>
</comment>
<comment type="catalytic activity">
    <reaction evidence="1">
        <text>2 a 1,2-diacyl-sn-glycero-3-phospho-(1'-sn-glycerol) = a cardiolipin + glycerol</text>
        <dbReference type="Rhea" id="RHEA:31451"/>
        <dbReference type="ChEBI" id="CHEBI:17754"/>
        <dbReference type="ChEBI" id="CHEBI:62237"/>
        <dbReference type="ChEBI" id="CHEBI:64716"/>
    </reaction>
</comment>
<comment type="subcellular location">
    <subcellularLocation>
        <location evidence="1">Cell inner membrane</location>
        <topology evidence="1">Multi-pass membrane protein</topology>
    </subcellularLocation>
</comment>
<comment type="similarity">
    <text evidence="1">Belongs to the phospholipase D family. Cardiolipin synthase subfamily. ClsA sub-subfamily.</text>
</comment>
<proteinExistence type="inferred from homology"/>
<accession>B4EWI7</accession>